<name>CYVC_LEOCM</name>
<proteinExistence type="evidence at protein level"/>
<protein>
    <recommendedName>
        <fullName>Cycloviolin-C</fullName>
    </recommendedName>
</protein>
<feature type="peptide" id="PRO_0000043605" description="Cycloviolin-C" evidence="2 3">
    <location>
        <begin position="1"/>
        <end position="30"/>
    </location>
</feature>
<feature type="disulfide bond" evidence="1 2">
    <location>
        <begin position="4"/>
        <end position="20"/>
    </location>
</feature>
<feature type="disulfide bond" evidence="1 2">
    <location>
        <begin position="8"/>
        <end position="22"/>
    </location>
</feature>
<feature type="disulfide bond" evidence="1 2">
    <location>
        <begin position="13"/>
        <end position="27"/>
    </location>
</feature>
<feature type="cross-link" description="Cyclopeptide (Gly-Asn)" evidence="3">
    <location>
        <begin position="1"/>
        <end position="30"/>
    </location>
</feature>
<accession>P84639</accession>
<sequence length="30" mass="3167">GIPCGESCVFIPCLTTVAGCSCKNKVCYRN</sequence>
<comment type="function">
    <text evidence="2 3 4">Probably participates in a plant defense mechanism. Has anti-HIV activity.</text>
</comment>
<comment type="domain">
    <text evidence="1">The presence of a 'disulfide through disulfide knot' structurally defines this protein as a knottin.</text>
</comment>
<comment type="PTM">
    <text evidence="2 3">This is a cyclic peptide.</text>
</comment>
<comment type="mass spectrometry" mass="3145.4" method="FAB" evidence="3"/>
<comment type="similarity">
    <text evidence="2">Belongs to the cyclotide family. Bracelet subfamily.</text>
</comment>
<comment type="caution">
    <text evidence="4">This peptide is cyclic. The start position was chosen by similarity to OAK1 (kalata-B1) for which the DNA sequence is known.</text>
</comment>
<reference evidence="4" key="1">
    <citation type="journal article" date="2000" name="J. Org. Chem.">
        <title>Cycloviolins A-D, anti-HIV macrocyclic peptides from Leonia cymosa.</title>
        <authorList>
            <person name="Hallock Y.F."/>
            <person name="Sowder R.C. II"/>
            <person name="Pannell L.K."/>
            <person name="Hughes C.B."/>
            <person name="Johnson D.G."/>
            <person name="Gulakowski R."/>
            <person name="Cardellina J.H. Jr."/>
            <person name="Boyd M.R."/>
        </authorList>
    </citation>
    <scope>PROTEIN SEQUENCE</scope>
    <scope>FUNCTION</scope>
    <scope>MASS SPECTROMETRY</scope>
    <source>
        <strain evidence="3">Q65T-5650</strain>
        <tissue evidence="3">Bark</tissue>
    </source>
</reference>
<evidence type="ECO:0000250" key="1">
    <source>
        <dbReference type="UniProtKB" id="P56879"/>
    </source>
</evidence>
<evidence type="ECO:0000255" key="2">
    <source>
        <dbReference type="PROSITE-ProRule" id="PRU00395"/>
    </source>
</evidence>
<evidence type="ECO:0000269" key="3">
    <source>
    </source>
</evidence>
<evidence type="ECO:0000305" key="4"/>
<organism>
    <name type="scientific">Leonia cymosa</name>
    <name type="common">Sacha uba</name>
    <dbReference type="NCBI Taxonomy" id="341676"/>
    <lineage>
        <taxon>Eukaryota</taxon>
        <taxon>Viridiplantae</taxon>
        <taxon>Streptophyta</taxon>
        <taxon>Embryophyta</taxon>
        <taxon>Tracheophyta</taxon>
        <taxon>Spermatophyta</taxon>
        <taxon>Magnoliopsida</taxon>
        <taxon>eudicotyledons</taxon>
        <taxon>Gunneridae</taxon>
        <taxon>Pentapetalae</taxon>
        <taxon>rosids</taxon>
        <taxon>fabids</taxon>
        <taxon>Malpighiales</taxon>
        <taxon>Violaceae</taxon>
        <taxon>Leonia</taxon>
    </lineage>
</organism>
<keyword id="KW-0903">Direct protein sequencing</keyword>
<keyword id="KW-1015">Disulfide bond</keyword>
<keyword id="KW-0960">Knottin</keyword>
<keyword id="KW-0611">Plant defense</keyword>
<dbReference type="SMR" id="P84639"/>
<dbReference type="GO" id="GO:0006952">
    <property type="term" value="P:defense response"/>
    <property type="evidence" value="ECO:0000314"/>
    <property type="project" value="UniProtKB"/>
</dbReference>
<dbReference type="InterPro" id="IPR005535">
    <property type="entry name" value="Cyclotide"/>
</dbReference>
<dbReference type="InterPro" id="IPR012323">
    <property type="entry name" value="Cyclotide_bracelet_CS"/>
</dbReference>
<dbReference type="InterPro" id="IPR036146">
    <property type="entry name" value="Cyclotide_sf"/>
</dbReference>
<dbReference type="Pfam" id="PF03784">
    <property type="entry name" value="Cyclotide"/>
    <property type="match status" value="1"/>
</dbReference>
<dbReference type="PIRSF" id="PIRSF037891">
    <property type="entry name" value="Cycloviolacin"/>
    <property type="match status" value="1"/>
</dbReference>
<dbReference type="SUPFAM" id="SSF57038">
    <property type="entry name" value="Cyclotides"/>
    <property type="match status" value="1"/>
</dbReference>
<dbReference type="PROSITE" id="PS51052">
    <property type="entry name" value="CYCLOTIDE"/>
    <property type="match status" value="1"/>
</dbReference>
<dbReference type="PROSITE" id="PS60008">
    <property type="entry name" value="CYCLOTIDE_BRACELET"/>
    <property type="match status" value="1"/>
</dbReference>